<organism>
    <name type="scientific">Actinobacillus succinogenes (strain ATCC 55618 / DSM 22257 / CCUG 43843 / 130Z)</name>
    <dbReference type="NCBI Taxonomy" id="339671"/>
    <lineage>
        <taxon>Bacteria</taxon>
        <taxon>Pseudomonadati</taxon>
        <taxon>Pseudomonadota</taxon>
        <taxon>Gammaproteobacteria</taxon>
        <taxon>Pasteurellales</taxon>
        <taxon>Pasteurellaceae</taxon>
        <taxon>Actinobacillus</taxon>
    </lineage>
</organism>
<protein>
    <recommendedName>
        <fullName evidence="1">Large ribosomal subunit protein uL30</fullName>
    </recommendedName>
    <alternativeName>
        <fullName evidence="2">50S ribosomal protein L30</fullName>
    </alternativeName>
</protein>
<evidence type="ECO:0000255" key="1">
    <source>
        <dbReference type="HAMAP-Rule" id="MF_01371"/>
    </source>
</evidence>
<evidence type="ECO:0000305" key="2"/>
<reference key="1">
    <citation type="journal article" date="2010" name="BMC Genomics">
        <title>A genomic perspective on the potential of Actinobacillus succinogenes for industrial succinate production.</title>
        <authorList>
            <person name="McKinlay J.B."/>
            <person name="Laivenieks M."/>
            <person name="Schindler B.D."/>
            <person name="McKinlay A.A."/>
            <person name="Siddaramappa S."/>
            <person name="Challacombe J.F."/>
            <person name="Lowry S.R."/>
            <person name="Clum A."/>
            <person name="Lapidus A.L."/>
            <person name="Burkhart K.B."/>
            <person name="Harkins V."/>
            <person name="Vieille C."/>
        </authorList>
    </citation>
    <scope>NUCLEOTIDE SEQUENCE [LARGE SCALE GENOMIC DNA]</scope>
    <source>
        <strain>ATCC 55618 / DSM 22257 / CCUG 43843 / 130Z</strain>
    </source>
</reference>
<gene>
    <name evidence="1" type="primary">rpmD</name>
    <name type="ordered locus">Asuc_0477</name>
</gene>
<proteinExistence type="inferred from homology"/>
<keyword id="KW-1185">Reference proteome</keyword>
<keyword id="KW-0687">Ribonucleoprotein</keyword>
<keyword id="KW-0689">Ribosomal protein</keyword>
<accession>A6VLK6</accession>
<comment type="subunit">
    <text evidence="1">Part of the 50S ribosomal subunit.</text>
</comment>
<comment type="similarity">
    <text evidence="1">Belongs to the universal ribosomal protein uL30 family.</text>
</comment>
<dbReference type="EMBL" id="CP000746">
    <property type="protein sequence ID" value="ABR73853.1"/>
    <property type="molecule type" value="Genomic_DNA"/>
</dbReference>
<dbReference type="RefSeq" id="WP_005543631.1">
    <property type="nucleotide sequence ID" value="NC_009655.1"/>
</dbReference>
<dbReference type="SMR" id="A6VLK6"/>
<dbReference type="STRING" id="339671.Asuc_0477"/>
<dbReference type="GeneID" id="93226855"/>
<dbReference type="KEGG" id="asu:Asuc_0477"/>
<dbReference type="eggNOG" id="COG1841">
    <property type="taxonomic scope" value="Bacteria"/>
</dbReference>
<dbReference type="HOGENOM" id="CLU_131047_1_4_6"/>
<dbReference type="OrthoDB" id="9812790at2"/>
<dbReference type="Proteomes" id="UP000001114">
    <property type="component" value="Chromosome"/>
</dbReference>
<dbReference type="GO" id="GO:0022625">
    <property type="term" value="C:cytosolic large ribosomal subunit"/>
    <property type="evidence" value="ECO:0007669"/>
    <property type="project" value="TreeGrafter"/>
</dbReference>
<dbReference type="GO" id="GO:0003735">
    <property type="term" value="F:structural constituent of ribosome"/>
    <property type="evidence" value="ECO:0007669"/>
    <property type="project" value="InterPro"/>
</dbReference>
<dbReference type="GO" id="GO:0006412">
    <property type="term" value="P:translation"/>
    <property type="evidence" value="ECO:0007669"/>
    <property type="project" value="UniProtKB-UniRule"/>
</dbReference>
<dbReference type="CDD" id="cd01658">
    <property type="entry name" value="Ribosomal_L30"/>
    <property type="match status" value="1"/>
</dbReference>
<dbReference type="FunFam" id="3.30.1390.20:FF:000001">
    <property type="entry name" value="50S ribosomal protein L30"/>
    <property type="match status" value="1"/>
</dbReference>
<dbReference type="Gene3D" id="3.30.1390.20">
    <property type="entry name" value="Ribosomal protein L30, ferredoxin-like fold domain"/>
    <property type="match status" value="1"/>
</dbReference>
<dbReference type="HAMAP" id="MF_01371_B">
    <property type="entry name" value="Ribosomal_uL30_B"/>
    <property type="match status" value="1"/>
</dbReference>
<dbReference type="InterPro" id="IPR036919">
    <property type="entry name" value="Ribo_uL30_ferredoxin-like_sf"/>
</dbReference>
<dbReference type="InterPro" id="IPR005996">
    <property type="entry name" value="Ribosomal_uL30_bac-type"/>
</dbReference>
<dbReference type="InterPro" id="IPR018038">
    <property type="entry name" value="Ribosomal_uL30_CS"/>
</dbReference>
<dbReference type="InterPro" id="IPR016082">
    <property type="entry name" value="Ribosomal_uL30_ferredoxin-like"/>
</dbReference>
<dbReference type="NCBIfam" id="TIGR01308">
    <property type="entry name" value="rpmD_bact"/>
    <property type="match status" value="1"/>
</dbReference>
<dbReference type="PANTHER" id="PTHR15892:SF2">
    <property type="entry name" value="LARGE RIBOSOMAL SUBUNIT PROTEIN UL30M"/>
    <property type="match status" value="1"/>
</dbReference>
<dbReference type="PANTHER" id="PTHR15892">
    <property type="entry name" value="MITOCHONDRIAL RIBOSOMAL PROTEIN L30"/>
    <property type="match status" value="1"/>
</dbReference>
<dbReference type="Pfam" id="PF00327">
    <property type="entry name" value="Ribosomal_L30"/>
    <property type="match status" value="1"/>
</dbReference>
<dbReference type="PIRSF" id="PIRSF002211">
    <property type="entry name" value="Ribosomal_L30_bac-type"/>
    <property type="match status" value="1"/>
</dbReference>
<dbReference type="SUPFAM" id="SSF55129">
    <property type="entry name" value="Ribosomal protein L30p/L7e"/>
    <property type="match status" value="1"/>
</dbReference>
<dbReference type="PROSITE" id="PS00634">
    <property type="entry name" value="RIBOSOMAL_L30"/>
    <property type="match status" value="1"/>
</dbReference>
<name>RL30_ACTSZ</name>
<feature type="chain" id="PRO_1000073448" description="Large ribosomal subunit protein uL30">
    <location>
        <begin position="1"/>
        <end position="59"/>
    </location>
</feature>
<sequence length="59" mass="6678">MAKTIKVTQVRSSIARLPKHKATLRGLGLRHMHHTVELIDTPAVRGMINQVSYMVKVEE</sequence>